<reference key="1">
    <citation type="journal article" date="2009" name="PLoS Genet.">
        <title>The complete genome and proteome of Laribacter hongkongensis reveal potential mechanisms for adaptations to different temperatures and habitats.</title>
        <authorList>
            <person name="Woo P.C.Y."/>
            <person name="Lau S.K.P."/>
            <person name="Tse H."/>
            <person name="Teng J.L.L."/>
            <person name="Curreem S.O."/>
            <person name="Tsang A.K.L."/>
            <person name="Fan R.Y.Y."/>
            <person name="Wong G.K.M."/>
            <person name="Huang Y."/>
            <person name="Loman N.J."/>
            <person name="Snyder L.A.S."/>
            <person name="Cai J.J."/>
            <person name="Huang J.-D."/>
            <person name="Mak W."/>
            <person name="Pallen M.J."/>
            <person name="Lok S."/>
            <person name="Yuen K.-Y."/>
        </authorList>
    </citation>
    <scope>NUCLEOTIDE SEQUENCE [LARGE SCALE GENOMIC DNA]</scope>
    <source>
        <strain>HLHK9</strain>
    </source>
</reference>
<evidence type="ECO:0000255" key="1">
    <source>
        <dbReference type="HAMAP-Rule" id="MF_00267"/>
    </source>
</evidence>
<feature type="chain" id="PRO_1000204697" description="Probable septum site-determining protein MinC">
    <location>
        <begin position="1"/>
        <end position="227"/>
    </location>
</feature>
<sequence>MSASADHTFDIKSARLNLFSIRLRSTRLADITRDLDNRFSADSPFSRTPAMLDVSQVNPVELDYRGLVARFAQYGIHLVGVRPTPAGLEGALDDAGLLPLGGDEALDESRLEDEPQPQTLVIDKPVRAGQQVYARGGNLVVLATVSAGAEVIADGDIHIYGSLRGRALAGARGQRDARIFVRSMQAELLSIAGIWRTLEQDLPAALASRPLQVLLESDKIVMRALPD</sequence>
<accession>C1DBV7</accession>
<protein>
    <recommendedName>
        <fullName evidence="1">Probable septum site-determining protein MinC</fullName>
    </recommendedName>
</protein>
<gene>
    <name evidence="1" type="primary">minC</name>
    <name type="ordered locus">LHK_02528</name>
</gene>
<keyword id="KW-0131">Cell cycle</keyword>
<keyword id="KW-0132">Cell division</keyword>
<keyword id="KW-1185">Reference proteome</keyword>
<keyword id="KW-0717">Septation</keyword>
<dbReference type="EMBL" id="CP001154">
    <property type="protein sequence ID" value="ACO75510.1"/>
    <property type="molecule type" value="Genomic_DNA"/>
</dbReference>
<dbReference type="RefSeq" id="WP_012697996.1">
    <property type="nucleotide sequence ID" value="NC_012559.1"/>
</dbReference>
<dbReference type="SMR" id="C1DBV7"/>
<dbReference type="STRING" id="557598.LHK_02528"/>
<dbReference type="GeneID" id="75110095"/>
<dbReference type="KEGG" id="lhk:LHK_02528"/>
<dbReference type="eggNOG" id="COG0850">
    <property type="taxonomic scope" value="Bacteria"/>
</dbReference>
<dbReference type="HOGENOM" id="CLU_067812_0_1_4"/>
<dbReference type="Proteomes" id="UP000002010">
    <property type="component" value="Chromosome"/>
</dbReference>
<dbReference type="GO" id="GO:0000902">
    <property type="term" value="P:cell morphogenesis"/>
    <property type="evidence" value="ECO:0007669"/>
    <property type="project" value="InterPro"/>
</dbReference>
<dbReference type="GO" id="GO:0000917">
    <property type="term" value="P:division septum assembly"/>
    <property type="evidence" value="ECO:0007669"/>
    <property type="project" value="UniProtKB-KW"/>
</dbReference>
<dbReference type="GO" id="GO:0051302">
    <property type="term" value="P:regulation of cell division"/>
    <property type="evidence" value="ECO:0007669"/>
    <property type="project" value="InterPro"/>
</dbReference>
<dbReference type="GO" id="GO:1901891">
    <property type="term" value="P:regulation of cell septum assembly"/>
    <property type="evidence" value="ECO:0007669"/>
    <property type="project" value="InterPro"/>
</dbReference>
<dbReference type="Gene3D" id="2.160.20.70">
    <property type="match status" value="1"/>
</dbReference>
<dbReference type="Gene3D" id="3.30.70.260">
    <property type="match status" value="1"/>
</dbReference>
<dbReference type="HAMAP" id="MF_00267">
    <property type="entry name" value="MinC"/>
    <property type="match status" value="1"/>
</dbReference>
<dbReference type="InterPro" id="IPR016098">
    <property type="entry name" value="CAP/MinC_C"/>
</dbReference>
<dbReference type="InterPro" id="IPR013033">
    <property type="entry name" value="MinC"/>
</dbReference>
<dbReference type="InterPro" id="IPR036145">
    <property type="entry name" value="MinC_C_sf"/>
</dbReference>
<dbReference type="InterPro" id="IPR007874">
    <property type="entry name" value="MinC_N"/>
</dbReference>
<dbReference type="InterPro" id="IPR005526">
    <property type="entry name" value="Septum_form_inhib_MinC_C"/>
</dbReference>
<dbReference type="NCBIfam" id="TIGR01222">
    <property type="entry name" value="minC"/>
    <property type="match status" value="1"/>
</dbReference>
<dbReference type="PANTHER" id="PTHR34108">
    <property type="entry name" value="SEPTUM SITE-DETERMINING PROTEIN MINC"/>
    <property type="match status" value="1"/>
</dbReference>
<dbReference type="PANTHER" id="PTHR34108:SF1">
    <property type="entry name" value="SEPTUM SITE-DETERMINING PROTEIN MINC"/>
    <property type="match status" value="1"/>
</dbReference>
<dbReference type="Pfam" id="PF03775">
    <property type="entry name" value="MinC_C"/>
    <property type="match status" value="1"/>
</dbReference>
<dbReference type="Pfam" id="PF05209">
    <property type="entry name" value="MinC_N"/>
    <property type="match status" value="1"/>
</dbReference>
<dbReference type="SUPFAM" id="SSF63848">
    <property type="entry name" value="Cell-division inhibitor MinC, C-terminal domain"/>
    <property type="match status" value="1"/>
</dbReference>
<proteinExistence type="inferred from homology"/>
<organism>
    <name type="scientific">Laribacter hongkongensis (strain HLHK9)</name>
    <dbReference type="NCBI Taxonomy" id="557598"/>
    <lineage>
        <taxon>Bacteria</taxon>
        <taxon>Pseudomonadati</taxon>
        <taxon>Pseudomonadota</taxon>
        <taxon>Betaproteobacteria</taxon>
        <taxon>Neisseriales</taxon>
        <taxon>Aquaspirillaceae</taxon>
        <taxon>Laribacter</taxon>
    </lineage>
</organism>
<name>MINC_LARHH</name>
<comment type="function">
    <text evidence="1">Cell division inhibitor that blocks the formation of polar Z ring septums. Rapidly oscillates between the poles of the cell to destabilize FtsZ filaments that have formed before they mature into polar Z rings. Prevents FtsZ polymerization.</text>
</comment>
<comment type="subunit">
    <text evidence="1">Interacts with MinD and FtsZ.</text>
</comment>
<comment type="similarity">
    <text evidence="1">Belongs to the MinC family.</text>
</comment>